<feature type="chain" id="PRO_0000334008" description="Cell division protein SepF">
    <location>
        <begin position="1"/>
        <end position="214"/>
    </location>
</feature>
<feature type="region of interest" description="Disordered" evidence="2">
    <location>
        <begin position="24"/>
        <end position="120"/>
    </location>
</feature>
<feature type="compositionally biased region" description="Basic and acidic residues" evidence="2">
    <location>
        <begin position="30"/>
        <end position="40"/>
    </location>
</feature>
<feature type="compositionally biased region" description="Polar residues" evidence="2">
    <location>
        <begin position="55"/>
        <end position="67"/>
    </location>
</feature>
<feature type="compositionally biased region" description="Basic and acidic residues" evidence="2">
    <location>
        <begin position="69"/>
        <end position="98"/>
    </location>
</feature>
<feature type="compositionally biased region" description="Polar residues" evidence="2">
    <location>
        <begin position="101"/>
        <end position="120"/>
    </location>
</feature>
<sequence length="214" mass="24354">MSIFNKDALSSFFGLSGEEDDYYDNYEEYEERKAVNEPPRRAARPKPQRPVQQQESYSQPAYTQQSEPVVEKPSARYRSAEAHQERDTQQAAYTEKKVVSMRSSNQSATTNTRRAQESTANAKTHKITIIEPRVYSEAMSIAKHLFAEEAVLVNFTLVEEDQARRIVDFLTGTVYALDGDIQRVGNEIFLCTPANMEIDSATAQSLANKQFFDF</sequence>
<proteinExistence type="inferred from homology"/>
<protein>
    <recommendedName>
        <fullName evidence="1">Cell division protein SepF</fullName>
    </recommendedName>
</protein>
<reference key="1">
    <citation type="journal article" date="2003" name="Science">
        <title>Role of mobile DNA in the evolution of vancomycin-resistant Enterococcus faecalis.</title>
        <authorList>
            <person name="Paulsen I.T."/>
            <person name="Banerjei L."/>
            <person name="Myers G.S.A."/>
            <person name="Nelson K.E."/>
            <person name="Seshadri R."/>
            <person name="Read T.D."/>
            <person name="Fouts D.E."/>
            <person name="Eisen J.A."/>
            <person name="Gill S.R."/>
            <person name="Heidelberg J.F."/>
            <person name="Tettelin H."/>
            <person name="Dodson R.J."/>
            <person name="Umayam L.A."/>
            <person name="Brinkac L.M."/>
            <person name="Beanan M.J."/>
            <person name="Daugherty S.C."/>
            <person name="DeBoy R.T."/>
            <person name="Durkin S.A."/>
            <person name="Kolonay J.F."/>
            <person name="Madupu R."/>
            <person name="Nelson W.C."/>
            <person name="Vamathevan J.J."/>
            <person name="Tran B."/>
            <person name="Upton J."/>
            <person name="Hansen T."/>
            <person name="Shetty J."/>
            <person name="Khouri H.M."/>
            <person name="Utterback T.R."/>
            <person name="Radune D."/>
            <person name="Ketchum K.A."/>
            <person name="Dougherty B.A."/>
            <person name="Fraser C.M."/>
        </authorList>
    </citation>
    <scope>NUCLEOTIDE SEQUENCE [LARGE SCALE GENOMIC DNA]</scope>
    <source>
        <strain>ATCC 700802 / V583</strain>
    </source>
</reference>
<organism>
    <name type="scientific">Enterococcus faecalis (strain ATCC 700802 / V583)</name>
    <dbReference type="NCBI Taxonomy" id="226185"/>
    <lineage>
        <taxon>Bacteria</taxon>
        <taxon>Bacillati</taxon>
        <taxon>Bacillota</taxon>
        <taxon>Bacilli</taxon>
        <taxon>Lactobacillales</taxon>
        <taxon>Enterococcaceae</taxon>
        <taxon>Enterococcus</taxon>
    </lineage>
</organism>
<comment type="function">
    <text evidence="1">Cell division protein that is part of the divisome complex and is recruited early to the Z-ring. Probably stimulates Z-ring formation, perhaps through the cross-linking of FtsZ protofilaments. Its function overlaps with FtsA.</text>
</comment>
<comment type="subunit">
    <text evidence="1">Homodimer. Interacts with FtsZ.</text>
</comment>
<comment type="subcellular location">
    <subcellularLocation>
        <location evidence="1">Cytoplasm</location>
    </subcellularLocation>
    <text evidence="1">Localizes to the division site, in a FtsZ-dependent manner.</text>
</comment>
<comment type="similarity">
    <text evidence="1">Belongs to the SepF family.</text>
</comment>
<gene>
    <name evidence="1" type="primary">sepF</name>
    <name type="ordered locus">EF_0999</name>
</gene>
<keyword id="KW-0131">Cell cycle</keyword>
<keyword id="KW-0132">Cell division</keyword>
<keyword id="KW-0963">Cytoplasm</keyword>
<keyword id="KW-1185">Reference proteome</keyword>
<keyword id="KW-0717">Septation</keyword>
<dbReference type="EMBL" id="AE016830">
    <property type="protein sequence ID" value="AAO80805.1"/>
    <property type="molecule type" value="Genomic_DNA"/>
</dbReference>
<dbReference type="RefSeq" id="NP_814735.1">
    <property type="nucleotide sequence ID" value="NC_004668.1"/>
</dbReference>
<dbReference type="RefSeq" id="WP_002355901.1">
    <property type="nucleotide sequence ID" value="NZ_KE136527.1"/>
</dbReference>
<dbReference type="SMR" id="Q836V4"/>
<dbReference type="STRING" id="226185.EF_0999"/>
<dbReference type="EnsemblBacteria" id="AAO80805">
    <property type="protein sequence ID" value="AAO80805"/>
    <property type="gene ID" value="EF_0999"/>
</dbReference>
<dbReference type="KEGG" id="efa:EF0999"/>
<dbReference type="PATRIC" id="fig|226185.45.peg.3205"/>
<dbReference type="eggNOG" id="COG1799">
    <property type="taxonomic scope" value="Bacteria"/>
</dbReference>
<dbReference type="HOGENOM" id="CLU_078499_4_1_9"/>
<dbReference type="Proteomes" id="UP000001415">
    <property type="component" value="Chromosome"/>
</dbReference>
<dbReference type="GO" id="GO:0005737">
    <property type="term" value="C:cytoplasm"/>
    <property type="evidence" value="ECO:0007669"/>
    <property type="project" value="UniProtKB-SubCell"/>
</dbReference>
<dbReference type="GO" id="GO:0000917">
    <property type="term" value="P:division septum assembly"/>
    <property type="evidence" value="ECO:0007669"/>
    <property type="project" value="UniProtKB-KW"/>
</dbReference>
<dbReference type="GO" id="GO:0043093">
    <property type="term" value="P:FtsZ-dependent cytokinesis"/>
    <property type="evidence" value="ECO:0007669"/>
    <property type="project" value="UniProtKB-UniRule"/>
</dbReference>
<dbReference type="Gene3D" id="3.30.110.150">
    <property type="entry name" value="SepF-like protein"/>
    <property type="match status" value="1"/>
</dbReference>
<dbReference type="HAMAP" id="MF_01197">
    <property type="entry name" value="SepF"/>
    <property type="match status" value="1"/>
</dbReference>
<dbReference type="InterPro" id="IPR023052">
    <property type="entry name" value="Cell_div_SepF"/>
</dbReference>
<dbReference type="InterPro" id="IPR007561">
    <property type="entry name" value="Cell_div_SepF/SepF-rel"/>
</dbReference>
<dbReference type="InterPro" id="IPR038594">
    <property type="entry name" value="SepF-like_sf"/>
</dbReference>
<dbReference type="PANTHER" id="PTHR35798">
    <property type="entry name" value="CELL DIVISION PROTEIN SEPF"/>
    <property type="match status" value="1"/>
</dbReference>
<dbReference type="PANTHER" id="PTHR35798:SF1">
    <property type="entry name" value="CELL DIVISION PROTEIN SEPF"/>
    <property type="match status" value="1"/>
</dbReference>
<dbReference type="Pfam" id="PF04472">
    <property type="entry name" value="SepF"/>
    <property type="match status" value="1"/>
</dbReference>
<evidence type="ECO:0000255" key="1">
    <source>
        <dbReference type="HAMAP-Rule" id="MF_01197"/>
    </source>
</evidence>
<evidence type="ECO:0000256" key="2">
    <source>
        <dbReference type="SAM" id="MobiDB-lite"/>
    </source>
</evidence>
<accession>Q836V4</accession>
<name>SEPF_ENTFA</name>